<evidence type="ECO:0000250" key="1"/>
<evidence type="ECO:0000255" key="2"/>
<evidence type="ECO:0000269" key="3">
    <source>
    </source>
</evidence>
<evidence type="ECO:0000305" key="4"/>
<protein>
    <recommendedName>
        <fullName>Putative outer membrane usher protein YqiG</fullName>
    </recommendedName>
</protein>
<sequence>MSGNIGANPVIIIGCASAYAVEFNKDLIEAEDRENVNLSQFETDGQLPVGKYSLSTLINNKRTPIHLDLQWVLIDNQTAVCVTPEQLTLLGFTDEFIEKTQQNLIDGCYPIEKEKQITTYLDKGKMQLSISAPQAWLKYKDANWTPPELWNHGIAGAFLDYNLYASHYAPHQGDNSQNISSYGQAGVNLGAWRLRTDYQYDQSFNNGKSQATNLDFPRIYLFRPIPAMNAKLTIGQYDTESSIFDSFHFSGISLKSDENMLPPDLRGYAPQITGVAQTNAKVTVSQNNRIIYQENVPPGPFAITNLFNTLQGQLDVKVEEEDGRVTQWQVASNSIPYLTRKGQIRYTTAMGKPTSVGGDSLQQPFFWTGEFSWGWLNNVSLYGGSVLTNRDYQSLAAGVGFNLNSLGSLSFDVTRSDAQLHNQDKETGYSYRANYSKRFESTGSQLTFAGYRFSDKNFVTMNEYINDTNHYTNYQNEKESYIVTFNQYLESLRLNTYVSLARNTYWDASSNVNYSLSLSRDFDIGPLKNVSTSLTFSRINWEEDNQDQLYLNISIPWGTSRTLSYGMQRNQDNEISHTASWYDSSDRNNSWSVSASGDNDEFKDMKASLRASYQHNTENGRLYLSGTSQRDSYYSLNASWNGSFTATRHGAAFHDYSGSADSRFMIDADGTEDIPLNNKRAVTNRYGIGVIPSVSSYITTSLSVDTRNLPENVDIENSVITTTLTEGAIGYAKLDTRKGYQIIGVIRLADGSHPPLGISVKDETSHKELGLVADGGFVYLNGIQDDNKLALRWGDKSCFIQPPNSSNLTTGTAILPCISQN</sequence>
<gene>
    <name type="primary">yqiG</name>
    <name type="ordered locus">b3046</name>
    <name type="ordered locus">JW5507</name>
</gene>
<accession>P76655</accession>
<accession>P77034</accession>
<accession>P77035</accession>
<accession>Q6BF51</accession>
<dbReference type="EMBL" id="U00096">
    <property type="status" value="NOT_ANNOTATED_CDS"/>
    <property type="molecule type" value="Genomic_DNA"/>
</dbReference>
<dbReference type="EMBL" id="AP009048">
    <property type="protein sequence ID" value="BAA16575.2"/>
    <property type="molecule type" value="Genomic_DNA"/>
</dbReference>
<dbReference type="PIR" id="D65092">
    <property type="entry name" value="D65092"/>
</dbReference>
<dbReference type="RefSeq" id="WP_000016375.1">
    <property type="nucleotide sequence ID" value="NZ_LN832404.1"/>
</dbReference>
<dbReference type="SMR" id="P76655"/>
<dbReference type="BioGRID" id="4262383">
    <property type="interactions" value="234"/>
</dbReference>
<dbReference type="DIP" id="DIP-12877N"/>
<dbReference type="FunCoup" id="P76655">
    <property type="interactions" value="47"/>
</dbReference>
<dbReference type="KEGG" id="ecj:JW5507"/>
<dbReference type="KEGG" id="ecoc:C3026_16635"/>
<dbReference type="PATRIC" id="fig|83333.103.peg.3947"/>
<dbReference type="EchoBASE" id="EB3979"/>
<dbReference type="eggNOG" id="COG3188">
    <property type="taxonomic scope" value="Bacteria"/>
</dbReference>
<dbReference type="HOGENOM" id="CLU_009120_1_1_6"/>
<dbReference type="InParanoid" id="P76655"/>
<dbReference type="OMA" id="RFSDKEY"/>
<dbReference type="OrthoDB" id="6554712at2"/>
<dbReference type="PhylomeDB" id="P76655"/>
<dbReference type="Proteomes" id="UP000000625">
    <property type="component" value="Chromosome"/>
</dbReference>
<dbReference type="GO" id="GO:0009279">
    <property type="term" value="C:cell outer membrane"/>
    <property type="evidence" value="ECO:0000318"/>
    <property type="project" value="GO_Central"/>
</dbReference>
<dbReference type="GO" id="GO:0015473">
    <property type="term" value="F:fimbrial usher porin activity"/>
    <property type="evidence" value="ECO:0000318"/>
    <property type="project" value="GO_Central"/>
</dbReference>
<dbReference type="GO" id="GO:0009297">
    <property type="term" value="P:pilus assembly"/>
    <property type="evidence" value="ECO:0000318"/>
    <property type="project" value="GO_Central"/>
</dbReference>
<dbReference type="Gene3D" id="2.60.40.2070">
    <property type="match status" value="1"/>
</dbReference>
<dbReference type="Gene3D" id="2.60.40.3110">
    <property type="match status" value="1"/>
</dbReference>
<dbReference type="Gene3D" id="3.10.20.410">
    <property type="match status" value="1"/>
</dbReference>
<dbReference type="Gene3D" id="2.60.40.2610">
    <property type="entry name" value="Outer membrane usher protein FimD, plug domain"/>
    <property type="match status" value="1"/>
</dbReference>
<dbReference type="InterPro" id="IPR000015">
    <property type="entry name" value="Fimb_usher"/>
</dbReference>
<dbReference type="InterPro" id="IPR018030">
    <property type="entry name" value="Fimbrial_membr_usher_CS"/>
</dbReference>
<dbReference type="InterPro" id="IPR042186">
    <property type="entry name" value="FimD_plug_dom"/>
</dbReference>
<dbReference type="InterPro" id="IPR025949">
    <property type="entry name" value="PapC-like_C"/>
</dbReference>
<dbReference type="InterPro" id="IPR043142">
    <property type="entry name" value="PapC-like_C_sf"/>
</dbReference>
<dbReference type="InterPro" id="IPR025885">
    <property type="entry name" value="PapC_N"/>
</dbReference>
<dbReference type="InterPro" id="IPR037224">
    <property type="entry name" value="PapC_N_sf"/>
</dbReference>
<dbReference type="PANTHER" id="PTHR30451">
    <property type="entry name" value="OUTER MEMBRANE USHER PROTEIN"/>
    <property type="match status" value="1"/>
</dbReference>
<dbReference type="PANTHER" id="PTHR30451:SF4">
    <property type="entry name" value="OUTER MEMBRANE USHER PROTEIN YQIG-RELATED"/>
    <property type="match status" value="1"/>
</dbReference>
<dbReference type="Pfam" id="PF13953">
    <property type="entry name" value="PapC_C"/>
    <property type="match status" value="1"/>
</dbReference>
<dbReference type="Pfam" id="PF13954">
    <property type="entry name" value="PapC_N"/>
    <property type="match status" value="1"/>
</dbReference>
<dbReference type="Pfam" id="PF00577">
    <property type="entry name" value="Usher"/>
    <property type="match status" value="1"/>
</dbReference>
<dbReference type="SUPFAM" id="SSF141729">
    <property type="entry name" value="FimD N-terminal domain-like"/>
    <property type="match status" value="1"/>
</dbReference>
<dbReference type="PROSITE" id="PS01151">
    <property type="entry name" value="FIMBRIAL_USHER"/>
    <property type="match status" value="1"/>
</dbReference>
<proteinExistence type="uncertain"/>
<organism>
    <name type="scientific">Escherichia coli (strain K12)</name>
    <dbReference type="NCBI Taxonomy" id="83333"/>
    <lineage>
        <taxon>Bacteria</taxon>
        <taxon>Pseudomonadati</taxon>
        <taxon>Pseudomonadota</taxon>
        <taxon>Gammaproteobacteria</taxon>
        <taxon>Enterobacterales</taxon>
        <taxon>Enterobacteriaceae</taxon>
        <taxon>Escherichia</taxon>
    </lineage>
</organism>
<feature type="signal peptide" evidence="2">
    <location>
        <begin position="1"/>
        <end position="20"/>
    </location>
</feature>
<feature type="chain" id="PRO_0000009334" description="Putative outer membrane usher protein YqiG">
    <location>
        <begin position="21"/>
        <end position="821"/>
    </location>
</feature>
<feature type="disulfide bond" evidence="2">
    <location>
        <begin position="798"/>
        <end position="817"/>
    </location>
</feature>
<feature type="sequence conflict" description="In Ref. 1." evidence="4" ref="1">
    <original>AIG</original>
    <variation>CYW</variation>
    <location>
        <begin position="728"/>
        <end position="730"/>
    </location>
</feature>
<name>YQIG_ECOLI</name>
<keyword id="KW-0998">Cell outer membrane</keyword>
<keyword id="KW-1015">Disulfide bond</keyword>
<keyword id="KW-1029">Fimbrium biogenesis</keyword>
<keyword id="KW-0472">Membrane</keyword>
<keyword id="KW-1185">Reference proteome</keyword>
<keyword id="KW-0732">Signal</keyword>
<keyword id="KW-0812">Transmembrane</keyword>
<keyword id="KW-1134">Transmembrane beta strand</keyword>
<keyword id="KW-0813">Transport</keyword>
<reference key="1">
    <citation type="journal article" date="1997" name="DNA Res.">
        <title>Construction of a contiguous 874-kb sequence of the Escherichia coli-K12 genome corresponding to 50.0-68.8 min on the linkage map and analysis of its sequence features.</title>
        <authorList>
            <person name="Yamamoto Y."/>
            <person name="Aiba H."/>
            <person name="Baba T."/>
            <person name="Hayashi K."/>
            <person name="Inada T."/>
            <person name="Isono K."/>
            <person name="Itoh T."/>
            <person name="Kimura S."/>
            <person name="Kitagawa M."/>
            <person name="Makino K."/>
            <person name="Miki T."/>
            <person name="Mitsuhashi N."/>
            <person name="Mizobuchi K."/>
            <person name="Mori H."/>
            <person name="Nakade S."/>
            <person name="Nakamura Y."/>
            <person name="Nashimoto H."/>
            <person name="Oshima T."/>
            <person name="Oyama S."/>
            <person name="Saito N."/>
            <person name="Sampei G."/>
            <person name="Satoh Y."/>
            <person name="Sivasundaram S."/>
            <person name="Tagami H."/>
            <person name="Takahashi H."/>
            <person name="Takeda J."/>
            <person name="Takemoto K."/>
            <person name="Uehara K."/>
            <person name="Wada C."/>
            <person name="Yamagata S."/>
            <person name="Horiuchi T."/>
        </authorList>
    </citation>
    <scope>NUCLEOTIDE SEQUENCE [LARGE SCALE GENOMIC DNA]</scope>
    <source>
        <strain>K12 / W3110 / ATCC 27325 / DSM 5911</strain>
    </source>
</reference>
<reference key="2">
    <citation type="journal article" date="1997" name="Science">
        <title>The complete genome sequence of Escherichia coli K-12.</title>
        <authorList>
            <person name="Blattner F.R."/>
            <person name="Plunkett G. III"/>
            <person name="Bloch C.A."/>
            <person name="Perna N.T."/>
            <person name="Burland V."/>
            <person name="Riley M."/>
            <person name="Collado-Vides J."/>
            <person name="Glasner J.D."/>
            <person name="Rode C.K."/>
            <person name="Mayhew G.F."/>
            <person name="Gregor J."/>
            <person name="Davis N.W."/>
            <person name="Kirkpatrick H.A."/>
            <person name="Goeden M.A."/>
            <person name="Rose D.J."/>
            <person name="Mau B."/>
            <person name="Shao Y."/>
        </authorList>
    </citation>
    <scope>NUCLEOTIDE SEQUENCE [LARGE SCALE GENOMIC DNA]</scope>
    <source>
        <strain>K12 / MG1655 / ATCC 47076</strain>
    </source>
</reference>
<reference key="3">
    <citation type="journal article" date="2006" name="Nucleic Acids Res.">
        <title>Escherichia coli K-12: a cooperatively developed annotation snapshot -- 2005.</title>
        <authorList>
            <person name="Riley M."/>
            <person name="Abe T."/>
            <person name="Arnaud M.B."/>
            <person name="Berlyn M.K.B."/>
            <person name="Blattner F.R."/>
            <person name="Chaudhuri R.R."/>
            <person name="Glasner J.D."/>
            <person name="Horiuchi T."/>
            <person name="Keseler I.M."/>
            <person name="Kosuge T."/>
            <person name="Mori H."/>
            <person name="Perna N.T."/>
            <person name="Plunkett G. III"/>
            <person name="Rudd K.E."/>
            <person name="Serres M.H."/>
            <person name="Thomas G.H."/>
            <person name="Thomson N.R."/>
            <person name="Wishart D."/>
            <person name="Wanner B.L."/>
        </authorList>
    </citation>
    <scope>SEQUENCE REVISION TO 121 AND 131</scope>
</reference>
<reference key="4">
    <citation type="journal article" date="2006" name="Mol. Syst. Biol.">
        <title>Highly accurate genome sequences of Escherichia coli K-12 strains MG1655 and W3110.</title>
        <authorList>
            <person name="Hayashi K."/>
            <person name="Morooka N."/>
            <person name="Yamamoto Y."/>
            <person name="Fujita K."/>
            <person name="Isono K."/>
            <person name="Choi S."/>
            <person name="Ohtsubo E."/>
            <person name="Baba T."/>
            <person name="Wanner B.L."/>
            <person name="Mori H."/>
            <person name="Horiuchi T."/>
        </authorList>
    </citation>
    <scope>NUCLEOTIDE SEQUENCE [LARGE SCALE GENOMIC DNA]</scope>
    <scope>SEQUENCE REVISION</scope>
    <source>
        <strain>K12 / W3110 / ATCC 27325 / DSM 5911</strain>
    </source>
</reference>
<reference key="5">
    <citation type="journal article" date="2013" name="Biochem. Biophys. Res. Commun.">
        <title>Four products from Escherichia coli pseudogenes increase hydrogen production.</title>
        <authorList>
            <person name="Mohd Yusoff M.Z."/>
            <person name="Hashiguchi Y."/>
            <person name="Maeda T."/>
            <person name="Wood T.K."/>
        </authorList>
    </citation>
    <scope>FUNCTION</scope>
    <scope>DISRUPTION PHENOTYPE</scope>
    <source>
        <strain>K12 / BW25113</strain>
    </source>
</reference>
<comment type="function">
    <text evidence="3 4">May be involved in H(2) production during fermentative growth (PubMed:24025676). Involved in the export and assembly of a fimbrial subunit across the outer membrane (Probable).</text>
</comment>
<comment type="subcellular location">
    <subcellularLocation>
        <location evidence="1">Cell outer membrane</location>
        <topology evidence="1">Multi-pass membrane protein</topology>
    </subcellularLocation>
</comment>
<comment type="disruption phenotype">
    <text evidence="3">Loss of H(2) production on minimal glucose and complex glucose but not on complex formate medium. Alters production of organic acids when grown on minimal glucose medium. This phenotype was complemented by reintroduction of the yqiG gene.</text>
</comment>
<comment type="similarity">
    <text evidence="4">Belongs to the fimbrial export usher family.</text>
</comment>
<comment type="caution">
    <text evidence="4">Could be the product of a pseudogene. It is missing about 10 N-terminal amino acids compared to orthologs.</text>
</comment>